<accession>Q2FLD9</accession>
<feature type="chain" id="PRO_1000066364" description="Carbamoyl phosphate synthase large chain">
    <location>
        <begin position="1"/>
        <end position="1056"/>
    </location>
</feature>
<feature type="domain" description="ATP-grasp 1" evidence="1">
    <location>
        <begin position="131"/>
        <end position="324"/>
    </location>
</feature>
<feature type="domain" description="ATP-grasp 2" evidence="1">
    <location>
        <begin position="663"/>
        <end position="854"/>
    </location>
</feature>
<feature type="domain" description="MGS-like" evidence="1">
    <location>
        <begin position="920"/>
        <end position="1056"/>
    </location>
</feature>
<feature type="region of interest" description="Carboxyphosphate synthetic domain" evidence="1">
    <location>
        <begin position="1"/>
        <end position="398"/>
    </location>
</feature>
<feature type="region of interest" description="Oligomerization domain" evidence="1">
    <location>
        <begin position="399"/>
        <end position="532"/>
    </location>
</feature>
<feature type="region of interest" description="Carbamoyl phosphate synthetic domain" evidence="1">
    <location>
        <begin position="533"/>
        <end position="921"/>
    </location>
</feature>
<feature type="region of interest" description="Allosteric domain" evidence="1">
    <location>
        <begin position="922"/>
        <end position="1056"/>
    </location>
</feature>
<feature type="binding site" evidence="1">
    <location>
        <position position="127"/>
    </location>
    <ligand>
        <name>ATP</name>
        <dbReference type="ChEBI" id="CHEBI:30616"/>
        <label>1</label>
    </ligand>
</feature>
<feature type="binding site" evidence="1">
    <location>
        <position position="167"/>
    </location>
    <ligand>
        <name>ATP</name>
        <dbReference type="ChEBI" id="CHEBI:30616"/>
        <label>1</label>
    </ligand>
</feature>
<feature type="binding site" evidence="1">
    <location>
        <position position="173"/>
    </location>
    <ligand>
        <name>ATP</name>
        <dbReference type="ChEBI" id="CHEBI:30616"/>
        <label>1</label>
    </ligand>
</feature>
<feature type="binding site" evidence="1">
    <location>
        <position position="174"/>
    </location>
    <ligand>
        <name>ATP</name>
        <dbReference type="ChEBI" id="CHEBI:30616"/>
        <label>1</label>
    </ligand>
</feature>
<feature type="binding site" evidence="1">
    <location>
        <position position="206"/>
    </location>
    <ligand>
        <name>ATP</name>
        <dbReference type="ChEBI" id="CHEBI:30616"/>
        <label>1</label>
    </ligand>
</feature>
<feature type="binding site" evidence="1">
    <location>
        <position position="208"/>
    </location>
    <ligand>
        <name>ATP</name>
        <dbReference type="ChEBI" id="CHEBI:30616"/>
        <label>1</label>
    </ligand>
</feature>
<feature type="binding site" evidence="1">
    <location>
        <position position="213"/>
    </location>
    <ligand>
        <name>ATP</name>
        <dbReference type="ChEBI" id="CHEBI:30616"/>
        <label>1</label>
    </ligand>
</feature>
<feature type="binding site" evidence="1">
    <location>
        <position position="239"/>
    </location>
    <ligand>
        <name>ATP</name>
        <dbReference type="ChEBI" id="CHEBI:30616"/>
        <label>1</label>
    </ligand>
</feature>
<feature type="binding site" evidence="1">
    <location>
        <position position="240"/>
    </location>
    <ligand>
        <name>ATP</name>
        <dbReference type="ChEBI" id="CHEBI:30616"/>
        <label>1</label>
    </ligand>
</feature>
<feature type="binding site" evidence="1">
    <location>
        <position position="241"/>
    </location>
    <ligand>
        <name>ATP</name>
        <dbReference type="ChEBI" id="CHEBI:30616"/>
        <label>1</label>
    </ligand>
</feature>
<feature type="binding site" evidence="1">
    <location>
        <position position="282"/>
    </location>
    <ligand>
        <name>ATP</name>
        <dbReference type="ChEBI" id="CHEBI:30616"/>
        <label>1</label>
    </ligand>
</feature>
<feature type="binding site" evidence="1">
    <location>
        <position position="282"/>
    </location>
    <ligand>
        <name>Mg(2+)</name>
        <dbReference type="ChEBI" id="CHEBI:18420"/>
        <label>1</label>
    </ligand>
</feature>
<feature type="binding site" evidence="1">
    <location>
        <position position="282"/>
    </location>
    <ligand>
        <name>Mn(2+)</name>
        <dbReference type="ChEBI" id="CHEBI:29035"/>
        <label>1</label>
    </ligand>
</feature>
<feature type="binding site" evidence="1">
    <location>
        <position position="295"/>
    </location>
    <ligand>
        <name>ATP</name>
        <dbReference type="ChEBI" id="CHEBI:30616"/>
        <label>1</label>
    </ligand>
</feature>
<feature type="binding site" evidence="1">
    <location>
        <position position="295"/>
    </location>
    <ligand>
        <name>Mg(2+)</name>
        <dbReference type="ChEBI" id="CHEBI:18420"/>
        <label>1</label>
    </ligand>
</feature>
<feature type="binding site" evidence="1">
    <location>
        <position position="295"/>
    </location>
    <ligand>
        <name>Mg(2+)</name>
        <dbReference type="ChEBI" id="CHEBI:18420"/>
        <label>2</label>
    </ligand>
</feature>
<feature type="binding site" evidence="1">
    <location>
        <position position="295"/>
    </location>
    <ligand>
        <name>Mn(2+)</name>
        <dbReference type="ChEBI" id="CHEBI:29035"/>
        <label>1</label>
    </ligand>
</feature>
<feature type="binding site" evidence="1">
    <location>
        <position position="295"/>
    </location>
    <ligand>
        <name>Mn(2+)</name>
        <dbReference type="ChEBI" id="CHEBI:29035"/>
        <label>2</label>
    </ligand>
</feature>
<feature type="binding site" evidence="1">
    <location>
        <position position="297"/>
    </location>
    <ligand>
        <name>Mg(2+)</name>
        <dbReference type="ChEBI" id="CHEBI:18420"/>
        <label>2</label>
    </ligand>
</feature>
<feature type="binding site" evidence="1">
    <location>
        <position position="297"/>
    </location>
    <ligand>
        <name>Mn(2+)</name>
        <dbReference type="ChEBI" id="CHEBI:29035"/>
        <label>2</label>
    </ligand>
</feature>
<feature type="binding site" evidence="1">
    <location>
        <position position="699"/>
    </location>
    <ligand>
        <name>ATP</name>
        <dbReference type="ChEBI" id="CHEBI:30616"/>
        <label>2</label>
    </ligand>
</feature>
<feature type="binding site" evidence="1">
    <location>
        <position position="738"/>
    </location>
    <ligand>
        <name>ATP</name>
        <dbReference type="ChEBI" id="CHEBI:30616"/>
        <label>2</label>
    </ligand>
</feature>
<feature type="binding site" evidence="1">
    <location>
        <position position="740"/>
    </location>
    <ligand>
        <name>ATP</name>
        <dbReference type="ChEBI" id="CHEBI:30616"/>
        <label>2</label>
    </ligand>
</feature>
<feature type="binding site" evidence="1">
    <location>
        <position position="745"/>
    </location>
    <ligand>
        <name>ATP</name>
        <dbReference type="ChEBI" id="CHEBI:30616"/>
        <label>2</label>
    </ligand>
</feature>
<feature type="binding site" evidence="1">
    <location>
        <position position="770"/>
    </location>
    <ligand>
        <name>ATP</name>
        <dbReference type="ChEBI" id="CHEBI:30616"/>
        <label>2</label>
    </ligand>
</feature>
<feature type="binding site" evidence="1">
    <location>
        <position position="771"/>
    </location>
    <ligand>
        <name>ATP</name>
        <dbReference type="ChEBI" id="CHEBI:30616"/>
        <label>2</label>
    </ligand>
</feature>
<feature type="binding site" evidence="1">
    <location>
        <position position="772"/>
    </location>
    <ligand>
        <name>ATP</name>
        <dbReference type="ChEBI" id="CHEBI:30616"/>
        <label>2</label>
    </ligand>
</feature>
<feature type="binding site" evidence="1">
    <location>
        <position position="773"/>
    </location>
    <ligand>
        <name>ATP</name>
        <dbReference type="ChEBI" id="CHEBI:30616"/>
        <label>2</label>
    </ligand>
</feature>
<feature type="binding site" evidence="1">
    <location>
        <position position="813"/>
    </location>
    <ligand>
        <name>ATP</name>
        <dbReference type="ChEBI" id="CHEBI:30616"/>
        <label>2</label>
    </ligand>
</feature>
<feature type="binding site" evidence="1">
    <location>
        <position position="813"/>
    </location>
    <ligand>
        <name>Mg(2+)</name>
        <dbReference type="ChEBI" id="CHEBI:18420"/>
        <label>3</label>
    </ligand>
</feature>
<feature type="binding site" evidence="1">
    <location>
        <position position="813"/>
    </location>
    <ligand>
        <name>Mn(2+)</name>
        <dbReference type="ChEBI" id="CHEBI:29035"/>
        <label>3</label>
    </ligand>
</feature>
<feature type="binding site" evidence="1">
    <location>
        <position position="825"/>
    </location>
    <ligand>
        <name>ATP</name>
        <dbReference type="ChEBI" id="CHEBI:30616"/>
        <label>2</label>
    </ligand>
</feature>
<feature type="binding site" evidence="1">
    <location>
        <position position="825"/>
    </location>
    <ligand>
        <name>Mg(2+)</name>
        <dbReference type="ChEBI" id="CHEBI:18420"/>
        <label>3</label>
    </ligand>
</feature>
<feature type="binding site" evidence="1">
    <location>
        <position position="825"/>
    </location>
    <ligand>
        <name>Mg(2+)</name>
        <dbReference type="ChEBI" id="CHEBI:18420"/>
        <label>4</label>
    </ligand>
</feature>
<feature type="binding site" evidence="1">
    <location>
        <position position="825"/>
    </location>
    <ligand>
        <name>Mn(2+)</name>
        <dbReference type="ChEBI" id="CHEBI:29035"/>
        <label>3</label>
    </ligand>
</feature>
<feature type="binding site" evidence="1">
    <location>
        <position position="825"/>
    </location>
    <ligand>
        <name>Mn(2+)</name>
        <dbReference type="ChEBI" id="CHEBI:29035"/>
        <label>4</label>
    </ligand>
</feature>
<feature type="binding site" evidence="1">
    <location>
        <position position="827"/>
    </location>
    <ligand>
        <name>Mg(2+)</name>
        <dbReference type="ChEBI" id="CHEBI:18420"/>
        <label>4</label>
    </ligand>
</feature>
<feature type="binding site" evidence="1">
    <location>
        <position position="827"/>
    </location>
    <ligand>
        <name>Mn(2+)</name>
        <dbReference type="ChEBI" id="CHEBI:29035"/>
        <label>4</label>
    </ligand>
</feature>
<protein>
    <recommendedName>
        <fullName evidence="1">Carbamoyl phosphate synthase large chain</fullName>
        <ecNumber evidence="1">6.3.4.16</ecNumber>
        <ecNumber evidence="1">6.3.5.5</ecNumber>
    </recommendedName>
    <alternativeName>
        <fullName evidence="1">Carbamoyl phosphate synthetase ammonia chain</fullName>
    </alternativeName>
</protein>
<dbReference type="EC" id="6.3.4.16" evidence="1"/>
<dbReference type="EC" id="6.3.5.5" evidence="1"/>
<dbReference type="EMBL" id="CP000254">
    <property type="protein sequence ID" value="ABD39893.1"/>
    <property type="molecule type" value="Genomic_DNA"/>
</dbReference>
<dbReference type="RefSeq" id="WP_011447189.1">
    <property type="nucleotide sequence ID" value="NC_007796.1"/>
</dbReference>
<dbReference type="SMR" id="Q2FLD9"/>
<dbReference type="FunCoup" id="Q2FLD9">
    <property type="interactions" value="193"/>
</dbReference>
<dbReference type="STRING" id="323259.Mhun_0115"/>
<dbReference type="EnsemblBacteria" id="ABD39893">
    <property type="protein sequence ID" value="ABD39893"/>
    <property type="gene ID" value="Mhun_0115"/>
</dbReference>
<dbReference type="GeneID" id="3923734"/>
<dbReference type="KEGG" id="mhu:Mhun_0115"/>
<dbReference type="eggNOG" id="arCOG01594">
    <property type="taxonomic scope" value="Archaea"/>
</dbReference>
<dbReference type="HOGENOM" id="CLU_000513_1_0_2"/>
<dbReference type="InParanoid" id="Q2FLD9"/>
<dbReference type="OrthoDB" id="85487at2157"/>
<dbReference type="UniPathway" id="UPA00068">
    <property type="reaction ID" value="UER00171"/>
</dbReference>
<dbReference type="UniPathway" id="UPA00070">
    <property type="reaction ID" value="UER00115"/>
</dbReference>
<dbReference type="Proteomes" id="UP000001941">
    <property type="component" value="Chromosome"/>
</dbReference>
<dbReference type="GO" id="GO:0005737">
    <property type="term" value="C:cytoplasm"/>
    <property type="evidence" value="ECO:0007669"/>
    <property type="project" value="TreeGrafter"/>
</dbReference>
<dbReference type="GO" id="GO:0005524">
    <property type="term" value="F:ATP binding"/>
    <property type="evidence" value="ECO:0007669"/>
    <property type="project" value="UniProtKB-UniRule"/>
</dbReference>
<dbReference type="GO" id="GO:0004087">
    <property type="term" value="F:carbamoyl-phosphate synthase (ammonia) activity"/>
    <property type="evidence" value="ECO:0007669"/>
    <property type="project" value="RHEA"/>
</dbReference>
<dbReference type="GO" id="GO:0004088">
    <property type="term" value="F:carbamoyl-phosphate synthase (glutamine-hydrolyzing) activity"/>
    <property type="evidence" value="ECO:0007669"/>
    <property type="project" value="UniProtKB-UniRule"/>
</dbReference>
<dbReference type="GO" id="GO:0046872">
    <property type="term" value="F:metal ion binding"/>
    <property type="evidence" value="ECO:0007669"/>
    <property type="project" value="UniProtKB-KW"/>
</dbReference>
<dbReference type="GO" id="GO:0044205">
    <property type="term" value="P:'de novo' UMP biosynthetic process"/>
    <property type="evidence" value="ECO:0007669"/>
    <property type="project" value="UniProtKB-UniRule"/>
</dbReference>
<dbReference type="GO" id="GO:0006541">
    <property type="term" value="P:glutamine metabolic process"/>
    <property type="evidence" value="ECO:0007669"/>
    <property type="project" value="TreeGrafter"/>
</dbReference>
<dbReference type="GO" id="GO:0006526">
    <property type="term" value="P:L-arginine biosynthetic process"/>
    <property type="evidence" value="ECO:0007669"/>
    <property type="project" value="UniProtKB-UniRule"/>
</dbReference>
<dbReference type="CDD" id="cd01424">
    <property type="entry name" value="MGS_CPS_II"/>
    <property type="match status" value="1"/>
</dbReference>
<dbReference type="FunFam" id="1.10.1030.10:FF:000002">
    <property type="entry name" value="Carbamoyl-phosphate synthase large chain"/>
    <property type="match status" value="1"/>
</dbReference>
<dbReference type="FunFam" id="3.30.1490.20:FF:000001">
    <property type="entry name" value="Carbamoyl-phosphate synthase large chain"/>
    <property type="match status" value="1"/>
</dbReference>
<dbReference type="FunFam" id="3.30.470.20:FF:000001">
    <property type="entry name" value="Carbamoyl-phosphate synthase large chain"/>
    <property type="match status" value="1"/>
</dbReference>
<dbReference type="FunFam" id="3.30.470.20:FF:000013">
    <property type="entry name" value="Carbamoyl-phosphate synthase large chain"/>
    <property type="match status" value="1"/>
</dbReference>
<dbReference type="FunFam" id="3.40.50.20:FF:000001">
    <property type="entry name" value="Carbamoyl-phosphate synthase large chain"/>
    <property type="match status" value="2"/>
</dbReference>
<dbReference type="Gene3D" id="3.40.50.20">
    <property type="match status" value="2"/>
</dbReference>
<dbReference type="Gene3D" id="3.30.1490.20">
    <property type="entry name" value="ATP-grasp fold, A domain"/>
    <property type="match status" value="1"/>
</dbReference>
<dbReference type="Gene3D" id="3.30.470.20">
    <property type="entry name" value="ATP-grasp fold, B domain"/>
    <property type="match status" value="2"/>
</dbReference>
<dbReference type="Gene3D" id="1.10.1030.10">
    <property type="entry name" value="Carbamoyl-phosphate synthetase, large subunit oligomerisation domain"/>
    <property type="match status" value="1"/>
</dbReference>
<dbReference type="Gene3D" id="3.40.50.1380">
    <property type="entry name" value="Methylglyoxal synthase-like domain"/>
    <property type="match status" value="1"/>
</dbReference>
<dbReference type="HAMAP" id="MF_01210_A">
    <property type="entry name" value="CPSase_L_chain_A"/>
    <property type="match status" value="1"/>
</dbReference>
<dbReference type="HAMAP" id="MF_01210_B">
    <property type="entry name" value="CPSase_L_chain_B"/>
    <property type="match status" value="1"/>
</dbReference>
<dbReference type="InterPro" id="IPR011761">
    <property type="entry name" value="ATP-grasp"/>
</dbReference>
<dbReference type="InterPro" id="IPR013815">
    <property type="entry name" value="ATP_grasp_subdomain_1"/>
</dbReference>
<dbReference type="InterPro" id="IPR006275">
    <property type="entry name" value="CarbamoylP_synth_lsu"/>
</dbReference>
<dbReference type="InterPro" id="IPR005480">
    <property type="entry name" value="CarbamoylP_synth_lsu_oligo"/>
</dbReference>
<dbReference type="InterPro" id="IPR036897">
    <property type="entry name" value="CarbamoylP_synth_lsu_oligo_sf"/>
</dbReference>
<dbReference type="InterPro" id="IPR005479">
    <property type="entry name" value="CbamoylP_synth_lsu-like_ATP-bd"/>
</dbReference>
<dbReference type="InterPro" id="IPR005483">
    <property type="entry name" value="CbamoylP_synth_lsu_CPSase_dom"/>
</dbReference>
<dbReference type="InterPro" id="IPR011607">
    <property type="entry name" value="MGS-like_dom"/>
</dbReference>
<dbReference type="InterPro" id="IPR036914">
    <property type="entry name" value="MGS-like_dom_sf"/>
</dbReference>
<dbReference type="InterPro" id="IPR033937">
    <property type="entry name" value="MGS_CPS_CarB"/>
</dbReference>
<dbReference type="InterPro" id="IPR016185">
    <property type="entry name" value="PreATP-grasp_dom_sf"/>
</dbReference>
<dbReference type="NCBIfam" id="TIGR01369">
    <property type="entry name" value="CPSaseII_lrg"/>
    <property type="match status" value="1"/>
</dbReference>
<dbReference type="NCBIfam" id="NF003671">
    <property type="entry name" value="PRK05294.1"/>
    <property type="match status" value="1"/>
</dbReference>
<dbReference type="NCBIfam" id="NF009455">
    <property type="entry name" value="PRK12815.1"/>
    <property type="match status" value="1"/>
</dbReference>
<dbReference type="PANTHER" id="PTHR11405:SF53">
    <property type="entry name" value="CARBAMOYL-PHOSPHATE SYNTHASE [AMMONIA], MITOCHONDRIAL"/>
    <property type="match status" value="1"/>
</dbReference>
<dbReference type="PANTHER" id="PTHR11405">
    <property type="entry name" value="CARBAMOYLTRANSFERASE FAMILY MEMBER"/>
    <property type="match status" value="1"/>
</dbReference>
<dbReference type="Pfam" id="PF02786">
    <property type="entry name" value="CPSase_L_D2"/>
    <property type="match status" value="2"/>
</dbReference>
<dbReference type="Pfam" id="PF02787">
    <property type="entry name" value="CPSase_L_D3"/>
    <property type="match status" value="1"/>
</dbReference>
<dbReference type="Pfam" id="PF02142">
    <property type="entry name" value="MGS"/>
    <property type="match status" value="1"/>
</dbReference>
<dbReference type="PRINTS" id="PR00098">
    <property type="entry name" value="CPSASE"/>
</dbReference>
<dbReference type="SMART" id="SM01096">
    <property type="entry name" value="CPSase_L_D3"/>
    <property type="match status" value="1"/>
</dbReference>
<dbReference type="SMART" id="SM00851">
    <property type="entry name" value="MGS"/>
    <property type="match status" value="1"/>
</dbReference>
<dbReference type="SUPFAM" id="SSF48108">
    <property type="entry name" value="Carbamoyl phosphate synthetase, large subunit connection domain"/>
    <property type="match status" value="1"/>
</dbReference>
<dbReference type="SUPFAM" id="SSF56059">
    <property type="entry name" value="Glutathione synthetase ATP-binding domain-like"/>
    <property type="match status" value="2"/>
</dbReference>
<dbReference type="SUPFAM" id="SSF52335">
    <property type="entry name" value="Methylglyoxal synthase-like"/>
    <property type="match status" value="1"/>
</dbReference>
<dbReference type="SUPFAM" id="SSF52440">
    <property type="entry name" value="PreATP-grasp domain"/>
    <property type="match status" value="2"/>
</dbReference>
<dbReference type="PROSITE" id="PS50975">
    <property type="entry name" value="ATP_GRASP"/>
    <property type="match status" value="2"/>
</dbReference>
<dbReference type="PROSITE" id="PS00866">
    <property type="entry name" value="CPSASE_1"/>
    <property type="match status" value="1"/>
</dbReference>
<dbReference type="PROSITE" id="PS00867">
    <property type="entry name" value="CPSASE_2"/>
    <property type="match status" value="2"/>
</dbReference>
<dbReference type="PROSITE" id="PS51855">
    <property type="entry name" value="MGS"/>
    <property type="match status" value="1"/>
</dbReference>
<comment type="function">
    <text evidence="1">Large subunit of the glutamine-dependent carbamoyl phosphate synthetase (CPSase). CPSase catalyzes the formation of carbamoyl phosphate from the ammonia moiety of glutamine, carbonate, and phosphate donated by ATP, constituting the first step of 2 biosynthetic pathways, one leading to arginine and/or urea and the other to pyrimidine nucleotides. The large subunit (synthetase) binds the substrates ammonia (free or transferred from glutamine from the small subunit), hydrogencarbonate and ATP and carries out an ATP-coupled ligase reaction, activating hydrogencarbonate by forming carboxy phosphate which reacts with ammonia to form carbamoyl phosphate.</text>
</comment>
<comment type="catalytic activity">
    <reaction evidence="1">
        <text>hydrogencarbonate + L-glutamine + 2 ATP + H2O = carbamoyl phosphate + L-glutamate + 2 ADP + phosphate + 2 H(+)</text>
        <dbReference type="Rhea" id="RHEA:18633"/>
        <dbReference type="ChEBI" id="CHEBI:15377"/>
        <dbReference type="ChEBI" id="CHEBI:15378"/>
        <dbReference type="ChEBI" id="CHEBI:17544"/>
        <dbReference type="ChEBI" id="CHEBI:29985"/>
        <dbReference type="ChEBI" id="CHEBI:30616"/>
        <dbReference type="ChEBI" id="CHEBI:43474"/>
        <dbReference type="ChEBI" id="CHEBI:58228"/>
        <dbReference type="ChEBI" id="CHEBI:58359"/>
        <dbReference type="ChEBI" id="CHEBI:456216"/>
        <dbReference type="EC" id="6.3.5.5"/>
    </reaction>
</comment>
<comment type="catalytic activity">
    <molecule>Carbamoyl phosphate synthase large chain</molecule>
    <reaction evidence="1">
        <text>hydrogencarbonate + NH4(+) + 2 ATP = carbamoyl phosphate + 2 ADP + phosphate + 2 H(+)</text>
        <dbReference type="Rhea" id="RHEA:18029"/>
        <dbReference type="ChEBI" id="CHEBI:15378"/>
        <dbReference type="ChEBI" id="CHEBI:17544"/>
        <dbReference type="ChEBI" id="CHEBI:28938"/>
        <dbReference type="ChEBI" id="CHEBI:30616"/>
        <dbReference type="ChEBI" id="CHEBI:43474"/>
        <dbReference type="ChEBI" id="CHEBI:58228"/>
        <dbReference type="ChEBI" id="CHEBI:456216"/>
        <dbReference type="EC" id="6.3.4.16"/>
    </reaction>
</comment>
<comment type="cofactor">
    <cofactor evidence="1">
        <name>Mg(2+)</name>
        <dbReference type="ChEBI" id="CHEBI:18420"/>
    </cofactor>
    <cofactor evidence="1">
        <name>Mn(2+)</name>
        <dbReference type="ChEBI" id="CHEBI:29035"/>
    </cofactor>
    <text evidence="1">Binds 4 Mg(2+) or Mn(2+) ions per subunit.</text>
</comment>
<comment type="pathway">
    <text evidence="1">Amino-acid biosynthesis; L-arginine biosynthesis; carbamoyl phosphate from bicarbonate: step 1/1.</text>
</comment>
<comment type="pathway">
    <text evidence="1">Pyrimidine metabolism; UMP biosynthesis via de novo pathway; (S)-dihydroorotate from bicarbonate: step 1/3.</text>
</comment>
<comment type="subunit">
    <text evidence="1">Composed of two chains; the small (or glutamine) chain promotes the hydrolysis of glutamine to ammonia, which is used by the large (or ammonia) chain to synthesize carbamoyl phosphate. Tetramer of heterodimers (alpha,beta)4.</text>
</comment>
<comment type="domain">
    <text evidence="1">The large subunit is composed of 2 ATP-grasp domains that are involved in binding the 2 ATP molecules needed for carbamoyl phosphate synthesis. The N-terminal ATP-grasp domain (referred to as the carboxyphosphate synthetic component) catalyzes the ATP-dependent phosphorylation of hydrogencarbonate to carboxyphosphate and the subsequent nucleophilic attack by ammonia to form a carbamate intermediate. The C-terminal ATP-grasp domain (referred to as the carbamoyl phosphate synthetic component) then catalyzes the phosphorylation of carbamate with the second ATP to form the end product carbamoyl phosphate. The reactive and unstable enzyme intermediates are sequentially channeled from one active site to the next through the interior of the protein over a distance of at least 96 A.</text>
</comment>
<comment type="similarity">
    <text evidence="1">Belongs to the CarB family.</text>
</comment>
<reference key="1">
    <citation type="journal article" date="2016" name="Stand. Genomic Sci.">
        <title>Complete genome sequence of Methanospirillum hungatei type strain JF1.</title>
        <authorList>
            <person name="Gunsalus R.P."/>
            <person name="Cook L.E."/>
            <person name="Crable B."/>
            <person name="Rohlin L."/>
            <person name="McDonald E."/>
            <person name="Mouttaki H."/>
            <person name="Sieber J.R."/>
            <person name="Poweleit N."/>
            <person name="Zhou H."/>
            <person name="Lapidus A.L."/>
            <person name="Daligault H.E."/>
            <person name="Land M."/>
            <person name="Gilna P."/>
            <person name="Ivanova N."/>
            <person name="Kyrpides N."/>
            <person name="Culley D.E."/>
            <person name="McInerney M.J."/>
        </authorList>
    </citation>
    <scope>NUCLEOTIDE SEQUENCE [LARGE SCALE GENOMIC DNA]</scope>
    <source>
        <strain>ATCC 27890 / DSM 864 / NBRC 100397 / JF-1</strain>
    </source>
</reference>
<sequence>MPRDPSIKKVLLIGSGPIQIGQAAEFDFSGSQACRALREEGVSVVLVNSNPATIQTDPDMADVTYVEPLQADIIAKIIKKEKPDGILSGMGGQTGLNLTAELAEMGALEGVKILGTPLKAIYEGEDREKFRDLMNRIGEPVPRSVIVSSLDQLEHAASVVGFPAIIRPAYTLGGAGGGIAYNLDELRRIVELGLGKSRIHQVLIEESVAGWKEIEFEVMRDANDTCITICGMENVDPMGVHTGESVVVAPILTLRDDEFHLLRNAALKIIRALDVQGGCNIQFAFKGDDEYRVIEVNPRVSRSSALASKATGYPIARVASKIAIGLRLDEILNTVTGKTPASFEPSIDYVVVKVPRWPFDKFKTADRTLTTAMKSTGEVMAIGRCVEEAFLKALRSLDTDVEHHTVLSELKMILSRPTDERFGALFDALRQGMTLNEIAEITRITPFWLEKIQNIVEMEKALTAHPDDATILKAKEFGFSDLEIAQYSGKDVSEVESKVGLPVYKMVDTCAAEFPAQTPYFYSTYGDKVCEVTHSDRKKVMILGSGPIRIGQGIEFDYCTVHAVTALREDGYEVHVVNNNPETVSTDFDTSDRLFFEPMTLEDVSHILQKDDYYGVMVQFGGQNAVNLAVPLKNEIDRLNLKTRILGTTPDAMDMAEDRDRFSVLLDSLSIPTPPNGSAYSEQEAYATAERIGYPVLVRPSYVLGGRAMEIVHDDTELATYMREAVRVSKSHPVLIDRFLQNAIELDVDAVCDGTDVIIGGIMEHIETAGVHSGDSACVIPPQSLSPEILADVRDYTRKIALGLGVVGLVNIQFAVQGSTVYVLEANPRASRTVPFVAKSVGIPLAKIAARVMMGERLADMPYKEIEVSHVAVKEVLLPFNKLPGVDTVLGPEMKSTGEVMGIDYDFGRAYYKASIAAHNRLPKSGNVFISVTDDLKDQILQVAKTFTENGLSIYATSGTVEFFAERGITANLVRKIAEGSPNVLDMLRAGEISLIINNFADKQSRHDHQQIMRVAVDYGTPYITTLQAAVAAAEAINSVREENLTIEPLQHYIGR</sequence>
<name>CARB_METHJ</name>
<keyword id="KW-0028">Amino-acid biosynthesis</keyword>
<keyword id="KW-0055">Arginine biosynthesis</keyword>
<keyword id="KW-0067">ATP-binding</keyword>
<keyword id="KW-0436">Ligase</keyword>
<keyword id="KW-0460">Magnesium</keyword>
<keyword id="KW-0464">Manganese</keyword>
<keyword id="KW-0479">Metal-binding</keyword>
<keyword id="KW-0547">Nucleotide-binding</keyword>
<keyword id="KW-0665">Pyrimidine biosynthesis</keyword>
<keyword id="KW-1185">Reference proteome</keyword>
<keyword id="KW-0677">Repeat</keyword>
<organism>
    <name type="scientific">Methanospirillum hungatei JF-1 (strain ATCC 27890 / DSM 864 / NBRC 100397 / JF-1)</name>
    <dbReference type="NCBI Taxonomy" id="323259"/>
    <lineage>
        <taxon>Archaea</taxon>
        <taxon>Methanobacteriati</taxon>
        <taxon>Methanobacteriota</taxon>
        <taxon>Stenosarchaea group</taxon>
        <taxon>Methanomicrobia</taxon>
        <taxon>Methanomicrobiales</taxon>
        <taxon>Methanospirillaceae</taxon>
        <taxon>Methanospirillum</taxon>
    </lineage>
</organism>
<gene>
    <name evidence="1" type="primary">carB</name>
    <name type="ordered locus">Mhun_0115</name>
</gene>
<proteinExistence type="inferred from homology"/>
<evidence type="ECO:0000255" key="1">
    <source>
        <dbReference type="HAMAP-Rule" id="MF_01210"/>
    </source>
</evidence>